<sequence>MNLKLFNPLILTSLTPLIGVFILLLIPSAKEKLCRNFALWISCLTFLFSLLLWIQFNSGTSFFQFSTTFLWFPFFNLYYTIGIDGISLFFILLTTLLIISCILVSWSSIQTNLKDYLICFLILEFLLIQVFSVLDLLLFYIYFESVLIPMFLIVGVWGSRQRKIRAAYQFFLYTLIGSLLMLLALLNIYFQTGTTDLQILWYIQFSEISQIFLWLSFFASFAVKIPMIPFHIWLPEAHAEAPTAGSVILAGILLKMGGYGFLRFSLPMFPVASIFFTPFIFTLSLVAIIYASLTTLRQIDLKKIIAYSSVSHMGFVTIGIFSLNIQGIEGSILLMLSHGLVSSALFLCIGVLYDRYKTRVIKYYSGLIQVMPLFGVFFLFFTFANLGFPGTSSFIGEVLVLLSSFQINKTLTLFASLGMIFGAAYSIWLFNRIIFGSLKLGYFSSFQDISRREFWILIPLAILILWMGIYPNSFLNEIHFSSVNLLELISHT</sequence>
<accession>P48915</accession>
<geneLocation type="mitochondrion"/>
<feature type="chain" id="PRO_0000117922" description="NADH-ubiquinone oxidoreductase chain 4">
    <location>
        <begin position="1"/>
        <end position="492"/>
    </location>
</feature>
<feature type="transmembrane region" description="Helical" evidence="2">
    <location>
        <begin position="9"/>
        <end position="29"/>
    </location>
</feature>
<feature type="transmembrane region" description="Helical" evidence="2">
    <location>
        <begin position="36"/>
        <end position="56"/>
    </location>
</feature>
<feature type="transmembrane region" description="Helical" evidence="2">
    <location>
        <begin position="63"/>
        <end position="83"/>
    </location>
</feature>
<feature type="transmembrane region" description="Helical" evidence="2">
    <location>
        <begin position="86"/>
        <end position="106"/>
    </location>
</feature>
<feature type="transmembrane region" description="Helical" evidence="2">
    <location>
        <begin position="115"/>
        <end position="135"/>
    </location>
</feature>
<feature type="transmembrane region" description="Helical" evidence="2">
    <location>
        <begin position="136"/>
        <end position="156"/>
    </location>
</feature>
<feature type="transmembrane region" description="Helical" evidence="2">
    <location>
        <begin position="170"/>
        <end position="190"/>
    </location>
</feature>
<feature type="transmembrane region" description="Helical" evidence="2">
    <location>
        <begin position="211"/>
        <end position="231"/>
    </location>
</feature>
<feature type="transmembrane region" description="Helical" evidence="2">
    <location>
        <begin position="242"/>
        <end position="262"/>
    </location>
</feature>
<feature type="transmembrane region" description="Helical" evidence="2">
    <location>
        <begin position="269"/>
        <end position="289"/>
    </location>
</feature>
<feature type="transmembrane region" description="Helical" evidence="2">
    <location>
        <begin position="304"/>
        <end position="324"/>
    </location>
</feature>
<feature type="transmembrane region" description="Helical" evidence="2">
    <location>
        <begin position="332"/>
        <end position="352"/>
    </location>
</feature>
<feature type="transmembrane region" description="Helical" evidence="2">
    <location>
        <begin position="370"/>
        <end position="390"/>
    </location>
</feature>
<feature type="transmembrane region" description="Helical" evidence="2">
    <location>
        <begin position="410"/>
        <end position="430"/>
    </location>
</feature>
<feature type="transmembrane region" description="Helical" evidence="2">
    <location>
        <begin position="454"/>
        <end position="474"/>
    </location>
</feature>
<name>NU4M_CHOCR</name>
<organism>
    <name type="scientific">Chondrus crispus</name>
    <name type="common">Carrageen Irish moss</name>
    <name type="synonym">Polymorpha crispa</name>
    <dbReference type="NCBI Taxonomy" id="2769"/>
    <lineage>
        <taxon>Eukaryota</taxon>
        <taxon>Rhodophyta</taxon>
        <taxon>Florideophyceae</taxon>
        <taxon>Rhodymeniophycidae</taxon>
        <taxon>Gigartinales</taxon>
        <taxon>Gigartinaceae</taxon>
        <taxon>Chondrus</taxon>
    </lineage>
</organism>
<comment type="function">
    <text evidence="1">Core subunit of the mitochondrial membrane respiratory chain NADH dehydrogenase (Complex I) that is believed to belong to the minimal assembly required for catalysis. Complex I functions in the transfer of electrons from NADH to the respiratory chain. The immediate electron acceptor for the enzyme is believed to be ubiquinone (By similarity).</text>
</comment>
<comment type="catalytic activity">
    <reaction>
        <text>a ubiquinone + NADH + 5 H(+)(in) = a ubiquinol + NAD(+) + 4 H(+)(out)</text>
        <dbReference type="Rhea" id="RHEA:29091"/>
        <dbReference type="Rhea" id="RHEA-COMP:9565"/>
        <dbReference type="Rhea" id="RHEA-COMP:9566"/>
        <dbReference type="ChEBI" id="CHEBI:15378"/>
        <dbReference type="ChEBI" id="CHEBI:16389"/>
        <dbReference type="ChEBI" id="CHEBI:17976"/>
        <dbReference type="ChEBI" id="CHEBI:57540"/>
        <dbReference type="ChEBI" id="CHEBI:57945"/>
        <dbReference type="EC" id="7.1.1.2"/>
    </reaction>
</comment>
<comment type="subcellular location">
    <subcellularLocation>
        <location evidence="1">Mitochondrion membrane</location>
        <topology evidence="1">Multi-pass membrane protein</topology>
    </subcellularLocation>
</comment>
<comment type="similarity">
    <text evidence="3">Belongs to the complex I subunit 4 family.</text>
</comment>
<protein>
    <recommendedName>
        <fullName>NADH-ubiquinone oxidoreductase chain 4</fullName>
        <ecNumber>7.1.1.2</ecNumber>
    </recommendedName>
    <alternativeName>
        <fullName>NADH dehydrogenase subunit 4</fullName>
    </alternativeName>
</protein>
<gene>
    <name type="primary">ND4</name>
    <name type="synonym">NAD4</name>
</gene>
<keyword id="KW-0249">Electron transport</keyword>
<keyword id="KW-0472">Membrane</keyword>
<keyword id="KW-0496">Mitochondrion</keyword>
<keyword id="KW-0520">NAD</keyword>
<keyword id="KW-0679">Respiratory chain</keyword>
<keyword id="KW-1278">Translocase</keyword>
<keyword id="KW-0812">Transmembrane</keyword>
<keyword id="KW-1133">Transmembrane helix</keyword>
<keyword id="KW-0813">Transport</keyword>
<keyword id="KW-0830">Ubiquinone</keyword>
<reference key="1">
    <citation type="journal article" date="1995" name="J. Mol. Biol.">
        <title>Complete sequence of the mitochondrial DNA of the rhodophyte Chondrus crispus (Gigartinales). Gene content and genome organization.</title>
        <authorList>
            <person name="Leblanc C."/>
            <person name="Boyen C."/>
            <person name="Richard O."/>
            <person name="Bonnard G."/>
            <person name="Grienenberger J.-M."/>
            <person name="Kloareg B."/>
        </authorList>
    </citation>
    <scope>NUCLEOTIDE SEQUENCE [GENOMIC DNA]</scope>
    <source>
        <tissue>Apices</tissue>
    </source>
</reference>
<evidence type="ECO:0000250" key="1"/>
<evidence type="ECO:0000255" key="2"/>
<evidence type="ECO:0000305" key="3"/>
<dbReference type="EC" id="7.1.1.2"/>
<dbReference type="EMBL" id="Z47547">
    <property type="protein sequence ID" value="CAA87623.1"/>
    <property type="molecule type" value="Genomic_DNA"/>
</dbReference>
<dbReference type="PIR" id="S59107">
    <property type="entry name" value="S59107"/>
</dbReference>
<dbReference type="RefSeq" id="NP_062496.1">
    <property type="nucleotide sequence ID" value="NC_001677.2"/>
</dbReference>
<dbReference type="SMR" id="P48915"/>
<dbReference type="GeneID" id="809385"/>
<dbReference type="KEGG" id="ccp:ChcroMp17"/>
<dbReference type="GO" id="GO:0031966">
    <property type="term" value="C:mitochondrial membrane"/>
    <property type="evidence" value="ECO:0007669"/>
    <property type="project" value="UniProtKB-SubCell"/>
</dbReference>
<dbReference type="GO" id="GO:0008137">
    <property type="term" value="F:NADH dehydrogenase (ubiquinone) activity"/>
    <property type="evidence" value="ECO:0007669"/>
    <property type="project" value="UniProtKB-EC"/>
</dbReference>
<dbReference type="GO" id="GO:0048039">
    <property type="term" value="F:ubiquinone binding"/>
    <property type="evidence" value="ECO:0007669"/>
    <property type="project" value="TreeGrafter"/>
</dbReference>
<dbReference type="GO" id="GO:0042773">
    <property type="term" value="P:ATP synthesis coupled electron transport"/>
    <property type="evidence" value="ECO:0007669"/>
    <property type="project" value="InterPro"/>
</dbReference>
<dbReference type="GO" id="GO:0015990">
    <property type="term" value="P:electron transport coupled proton transport"/>
    <property type="evidence" value="ECO:0007669"/>
    <property type="project" value="TreeGrafter"/>
</dbReference>
<dbReference type="InterPro" id="IPR010227">
    <property type="entry name" value="NADH_Q_OxRdtase_chainM/4"/>
</dbReference>
<dbReference type="InterPro" id="IPR003918">
    <property type="entry name" value="NADH_UbQ_OxRdtase"/>
</dbReference>
<dbReference type="InterPro" id="IPR001750">
    <property type="entry name" value="ND/Mrp_TM"/>
</dbReference>
<dbReference type="NCBIfam" id="TIGR01972">
    <property type="entry name" value="NDH_I_M"/>
    <property type="match status" value="1"/>
</dbReference>
<dbReference type="NCBIfam" id="NF004499">
    <property type="entry name" value="PRK05846.1-3"/>
    <property type="match status" value="1"/>
</dbReference>
<dbReference type="PANTHER" id="PTHR43507">
    <property type="entry name" value="NADH-UBIQUINONE OXIDOREDUCTASE CHAIN 4"/>
    <property type="match status" value="1"/>
</dbReference>
<dbReference type="PANTHER" id="PTHR43507:SF1">
    <property type="entry name" value="NADH-UBIQUINONE OXIDOREDUCTASE CHAIN 4"/>
    <property type="match status" value="1"/>
</dbReference>
<dbReference type="Pfam" id="PF00361">
    <property type="entry name" value="Proton_antipo_M"/>
    <property type="match status" value="1"/>
</dbReference>
<dbReference type="PRINTS" id="PR01437">
    <property type="entry name" value="NUOXDRDTASE4"/>
</dbReference>
<proteinExistence type="inferred from homology"/>